<feature type="chain" id="PRO_0000356126" description="Pentatricopeptide repeat-containing protein At3g47530">
    <location>
        <begin position="1"/>
        <end position="591"/>
    </location>
</feature>
<feature type="repeat" description="PPR 1">
    <location>
        <begin position="76"/>
        <end position="110"/>
    </location>
</feature>
<feature type="repeat" description="PPR 2">
    <location>
        <begin position="112"/>
        <end position="146"/>
    </location>
</feature>
<feature type="repeat" description="PPR 3">
    <location>
        <begin position="147"/>
        <end position="177"/>
    </location>
</feature>
<feature type="repeat" description="PPR 4">
    <location>
        <begin position="178"/>
        <end position="208"/>
    </location>
</feature>
<feature type="repeat" description="PPR 5">
    <location>
        <begin position="216"/>
        <end position="250"/>
    </location>
</feature>
<feature type="repeat" description="PPR 6">
    <location>
        <begin position="251"/>
        <end position="281"/>
    </location>
</feature>
<feature type="repeat" description="PPR 7">
    <location>
        <begin position="282"/>
        <end position="316"/>
    </location>
</feature>
<feature type="repeat" description="PPR 8">
    <location>
        <begin position="317"/>
        <end position="351"/>
    </location>
</feature>
<feature type="repeat" description="PPR 9">
    <location>
        <begin position="354"/>
        <end position="384"/>
    </location>
</feature>
<feature type="region of interest" description="Type E motif">
    <location>
        <begin position="389"/>
        <end position="464"/>
    </location>
</feature>
<feature type="region of interest" description="Type E(+) motif">
    <location>
        <begin position="465"/>
        <end position="495"/>
    </location>
</feature>
<feature type="region of interest" description="Type DYW motif">
    <location>
        <begin position="496"/>
        <end position="591"/>
    </location>
</feature>
<gene>
    <name type="primary">PCMP-H76</name>
    <name type="ordered locus">At3g47530</name>
    <name type="ORF">F1P2.80</name>
</gene>
<reference key="1">
    <citation type="journal article" date="2000" name="Nature">
        <title>Sequence and analysis of chromosome 3 of the plant Arabidopsis thaliana.</title>
        <authorList>
            <person name="Salanoubat M."/>
            <person name="Lemcke K."/>
            <person name="Rieger M."/>
            <person name="Ansorge W."/>
            <person name="Unseld M."/>
            <person name="Fartmann B."/>
            <person name="Valle G."/>
            <person name="Bloecker H."/>
            <person name="Perez-Alonso M."/>
            <person name="Obermaier B."/>
            <person name="Delseny M."/>
            <person name="Boutry M."/>
            <person name="Grivell L.A."/>
            <person name="Mache R."/>
            <person name="Puigdomenech P."/>
            <person name="De Simone V."/>
            <person name="Choisne N."/>
            <person name="Artiguenave F."/>
            <person name="Robert C."/>
            <person name="Brottier P."/>
            <person name="Wincker P."/>
            <person name="Cattolico L."/>
            <person name="Weissenbach J."/>
            <person name="Saurin W."/>
            <person name="Quetier F."/>
            <person name="Schaefer M."/>
            <person name="Mueller-Auer S."/>
            <person name="Gabel C."/>
            <person name="Fuchs M."/>
            <person name="Benes V."/>
            <person name="Wurmbach E."/>
            <person name="Drzonek H."/>
            <person name="Erfle H."/>
            <person name="Jordan N."/>
            <person name="Bangert S."/>
            <person name="Wiedelmann R."/>
            <person name="Kranz H."/>
            <person name="Voss H."/>
            <person name="Holland R."/>
            <person name="Brandt P."/>
            <person name="Nyakatura G."/>
            <person name="Vezzi A."/>
            <person name="D'Angelo M."/>
            <person name="Pallavicini A."/>
            <person name="Toppo S."/>
            <person name="Simionati B."/>
            <person name="Conrad A."/>
            <person name="Hornischer K."/>
            <person name="Kauer G."/>
            <person name="Loehnert T.-H."/>
            <person name="Nordsiek G."/>
            <person name="Reichelt J."/>
            <person name="Scharfe M."/>
            <person name="Schoen O."/>
            <person name="Bargues M."/>
            <person name="Terol J."/>
            <person name="Climent J."/>
            <person name="Navarro P."/>
            <person name="Collado C."/>
            <person name="Perez-Perez A."/>
            <person name="Ottenwaelder B."/>
            <person name="Duchemin D."/>
            <person name="Cooke R."/>
            <person name="Laudie M."/>
            <person name="Berger-Llauro C."/>
            <person name="Purnelle B."/>
            <person name="Masuy D."/>
            <person name="de Haan M."/>
            <person name="Maarse A.C."/>
            <person name="Alcaraz J.-P."/>
            <person name="Cottet A."/>
            <person name="Casacuberta E."/>
            <person name="Monfort A."/>
            <person name="Argiriou A."/>
            <person name="Flores M."/>
            <person name="Liguori R."/>
            <person name="Vitale D."/>
            <person name="Mannhaupt G."/>
            <person name="Haase D."/>
            <person name="Schoof H."/>
            <person name="Rudd S."/>
            <person name="Zaccaria P."/>
            <person name="Mewes H.-W."/>
            <person name="Mayer K.F.X."/>
            <person name="Kaul S."/>
            <person name="Town C.D."/>
            <person name="Koo H.L."/>
            <person name="Tallon L.J."/>
            <person name="Jenkins J."/>
            <person name="Rooney T."/>
            <person name="Rizzo M."/>
            <person name="Walts A."/>
            <person name="Utterback T."/>
            <person name="Fujii C.Y."/>
            <person name="Shea T.P."/>
            <person name="Creasy T.H."/>
            <person name="Haas B."/>
            <person name="Maiti R."/>
            <person name="Wu D."/>
            <person name="Peterson J."/>
            <person name="Van Aken S."/>
            <person name="Pai G."/>
            <person name="Militscher J."/>
            <person name="Sellers P."/>
            <person name="Gill J.E."/>
            <person name="Feldblyum T.V."/>
            <person name="Preuss D."/>
            <person name="Lin X."/>
            <person name="Nierman W.C."/>
            <person name="Salzberg S.L."/>
            <person name="White O."/>
            <person name="Venter J.C."/>
            <person name="Fraser C.M."/>
            <person name="Kaneko T."/>
            <person name="Nakamura Y."/>
            <person name="Sato S."/>
            <person name="Kato T."/>
            <person name="Asamizu E."/>
            <person name="Sasamoto S."/>
            <person name="Kimura T."/>
            <person name="Idesawa K."/>
            <person name="Kawashima K."/>
            <person name="Kishida Y."/>
            <person name="Kiyokawa C."/>
            <person name="Kohara M."/>
            <person name="Matsumoto M."/>
            <person name="Matsuno A."/>
            <person name="Muraki A."/>
            <person name="Nakayama S."/>
            <person name="Nakazaki N."/>
            <person name="Shinpo S."/>
            <person name="Takeuchi C."/>
            <person name="Wada T."/>
            <person name="Watanabe A."/>
            <person name="Yamada M."/>
            <person name="Yasuda M."/>
            <person name="Tabata S."/>
        </authorList>
    </citation>
    <scope>NUCLEOTIDE SEQUENCE [LARGE SCALE GENOMIC DNA]</scope>
    <source>
        <strain>cv. Columbia</strain>
    </source>
</reference>
<reference key="2">
    <citation type="journal article" date="2017" name="Plant J.">
        <title>Araport11: a complete reannotation of the Arabidopsis thaliana reference genome.</title>
        <authorList>
            <person name="Cheng C.Y."/>
            <person name="Krishnakumar V."/>
            <person name="Chan A.P."/>
            <person name="Thibaud-Nissen F."/>
            <person name="Schobel S."/>
            <person name="Town C.D."/>
        </authorList>
    </citation>
    <scope>GENOME REANNOTATION</scope>
    <source>
        <strain>cv. Columbia</strain>
    </source>
</reference>
<reference key="3">
    <citation type="submission" date="2005-03" db="EMBL/GenBank/DDBJ databases">
        <title>Large-scale analysis of RIKEN Arabidopsis full-length (RAFL) cDNAs.</title>
        <authorList>
            <person name="Totoki Y."/>
            <person name="Seki M."/>
            <person name="Ishida J."/>
            <person name="Nakajima M."/>
            <person name="Enju A."/>
            <person name="Kamiya A."/>
            <person name="Narusaka M."/>
            <person name="Shin-i T."/>
            <person name="Nakagawa M."/>
            <person name="Sakamoto N."/>
            <person name="Oishi K."/>
            <person name="Kohara Y."/>
            <person name="Kobayashi M."/>
            <person name="Toyoda A."/>
            <person name="Sakaki Y."/>
            <person name="Sakurai T."/>
            <person name="Iida K."/>
            <person name="Akiyama K."/>
            <person name="Satou M."/>
            <person name="Toyoda T."/>
            <person name="Konagaya A."/>
            <person name="Carninci P."/>
            <person name="Kawai J."/>
            <person name="Hayashizaki Y."/>
            <person name="Shinozaki K."/>
        </authorList>
    </citation>
    <scope>NUCLEOTIDE SEQUENCE [LARGE SCALE MRNA]</scope>
    <source>
        <strain>cv. Columbia</strain>
    </source>
</reference>
<reference key="4">
    <citation type="journal article" date="2004" name="Plant Cell">
        <title>Genome-wide analysis of Arabidopsis pentatricopeptide repeat proteins reveals their essential role in organelle biogenesis.</title>
        <authorList>
            <person name="Lurin C."/>
            <person name="Andres C."/>
            <person name="Aubourg S."/>
            <person name="Bellaoui M."/>
            <person name="Bitton F."/>
            <person name="Bruyere C."/>
            <person name="Caboche M."/>
            <person name="Debast C."/>
            <person name="Gualberto J."/>
            <person name="Hoffmann B."/>
            <person name="Lecharny A."/>
            <person name="Le Ret M."/>
            <person name="Martin-Magniette M.-L."/>
            <person name="Mireau H."/>
            <person name="Peeters N."/>
            <person name="Renou J.-P."/>
            <person name="Szurek B."/>
            <person name="Taconnat L."/>
            <person name="Small I."/>
        </authorList>
    </citation>
    <scope>GENE FAMILY</scope>
</reference>
<protein>
    <recommendedName>
        <fullName>Pentatricopeptide repeat-containing protein At3g47530</fullName>
    </recommendedName>
</protein>
<keyword id="KW-1185">Reference proteome</keyword>
<keyword id="KW-0677">Repeat</keyword>
<accession>Q9SN85</accession>
<name>PP267_ARATH</name>
<dbReference type="EMBL" id="AL132955">
    <property type="protein sequence ID" value="CAB61979.1"/>
    <property type="molecule type" value="Genomic_DNA"/>
</dbReference>
<dbReference type="EMBL" id="CP002686">
    <property type="protein sequence ID" value="AEE78293.1"/>
    <property type="molecule type" value="Genomic_DNA"/>
</dbReference>
<dbReference type="EMBL" id="AK221462">
    <property type="protein sequence ID" value="BAD94558.1"/>
    <property type="molecule type" value="mRNA"/>
</dbReference>
<dbReference type="PIR" id="T45713">
    <property type="entry name" value="T45713"/>
</dbReference>
<dbReference type="RefSeq" id="NP_190337.1">
    <property type="nucleotide sequence ID" value="NM_114621.3"/>
</dbReference>
<dbReference type="SMR" id="Q9SN85"/>
<dbReference type="FunCoup" id="Q9SN85">
    <property type="interactions" value="147"/>
</dbReference>
<dbReference type="STRING" id="3702.Q9SN85"/>
<dbReference type="PaxDb" id="3702-AT3G47530.1"/>
<dbReference type="ProteomicsDB" id="249108"/>
<dbReference type="EnsemblPlants" id="AT3G47530.1">
    <property type="protein sequence ID" value="AT3G47530.1"/>
    <property type="gene ID" value="AT3G47530"/>
</dbReference>
<dbReference type="GeneID" id="823907"/>
<dbReference type="Gramene" id="AT3G47530.1">
    <property type="protein sequence ID" value="AT3G47530.1"/>
    <property type="gene ID" value="AT3G47530"/>
</dbReference>
<dbReference type="KEGG" id="ath:AT3G47530"/>
<dbReference type="Araport" id="AT3G47530"/>
<dbReference type="TAIR" id="AT3G47530"/>
<dbReference type="eggNOG" id="KOG4197">
    <property type="taxonomic scope" value="Eukaryota"/>
</dbReference>
<dbReference type="HOGENOM" id="CLU_002706_37_8_1"/>
<dbReference type="InParanoid" id="Q9SN85"/>
<dbReference type="OMA" id="SSAGHWE"/>
<dbReference type="PhylomeDB" id="Q9SN85"/>
<dbReference type="PRO" id="PR:Q9SN85"/>
<dbReference type="Proteomes" id="UP000006548">
    <property type="component" value="Chromosome 3"/>
</dbReference>
<dbReference type="ExpressionAtlas" id="Q9SN85">
    <property type="expression patterns" value="baseline and differential"/>
</dbReference>
<dbReference type="GO" id="GO:0003723">
    <property type="term" value="F:RNA binding"/>
    <property type="evidence" value="ECO:0007669"/>
    <property type="project" value="InterPro"/>
</dbReference>
<dbReference type="GO" id="GO:0008270">
    <property type="term" value="F:zinc ion binding"/>
    <property type="evidence" value="ECO:0007669"/>
    <property type="project" value="InterPro"/>
</dbReference>
<dbReference type="GO" id="GO:0009451">
    <property type="term" value="P:RNA modification"/>
    <property type="evidence" value="ECO:0007669"/>
    <property type="project" value="InterPro"/>
</dbReference>
<dbReference type="FunFam" id="1.25.40.10:FF:001913">
    <property type="entry name" value="Pentatricopeptide repeat-containing protein"/>
    <property type="match status" value="1"/>
</dbReference>
<dbReference type="FunFam" id="1.25.40.10:FF:000454">
    <property type="entry name" value="Pentatricopeptide repeat-containing protein At3g47530"/>
    <property type="match status" value="1"/>
</dbReference>
<dbReference type="Gene3D" id="1.25.40.10">
    <property type="entry name" value="Tetratricopeptide repeat domain"/>
    <property type="match status" value="3"/>
</dbReference>
<dbReference type="InterPro" id="IPR032867">
    <property type="entry name" value="DYW_dom"/>
</dbReference>
<dbReference type="InterPro" id="IPR046848">
    <property type="entry name" value="E_motif"/>
</dbReference>
<dbReference type="InterPro" id="IPR002885">
    <property type="entry name" value="Pentatricopeptide_rpt"/>
</dbReference>
<dbReference type="InterPro" id="IPR046960">
    <property type="entry name" value="PPR_At4g14850-like_plant"/>
</dbReference>
<dbReference type="InterPro" id="IPR011990">
    <property type="entry name" value="TPR-like_helical_dom_sf"/>
</dbReference>
<dbReference type="NCBIfam" id="TIGR00756">
    <property type="entry name" value="PPR"/>
    <property type="match status" value="3"/>
</dbReference>
<dbReference type="PANTHER" id="PTHR47926:SF469">
    <property type="entry name" value="DYW DOMAIN-CONTAINING PROTEIN"/>
    <property type="match status" value="1"/>
</dbReference>
<dbReference type="PANTHER" id="PTHR47926">
    <property type="entry name" value="PENTATRICOPEPTIDE REPEAT-CONTAINING PROTEIN"/>
    <property type="match status" value="1"/>
</dbReference>
<dbReference type="Pfam" id="PF14432">
    <property type="entry name" value="DYW_deaminase"/>
    <property type="match status" value="1"/>
</dbReference>
<dbReference type="Pfam" id="PF20431">
    <property type="entry name" value="E_motif"/>
    <property type="match status" value="1"/>
</dbReference>
<dbReference type="Pfam" id="PF01535">
    <property type="entry name" value="PPR"/>
    <property type="match status" value="2"/>
</dbReference>
<dbReference type="Pfam" id="PF13041">
    <property type="entry name" value="PPR_2"/>
    <property type="match status" value="1"/>
</dbReference>
<dbReference type="PROSITE" id="PS51375">
    <property type="entry name" value="PPR"/>
    <property type="match status" value="11"/>
</dbReference>
<proteinExistence type="evidence at transcript level"/>
<organism>
    <name type="scientific">Arabidopsis thaliana</name>
    <name type="common">Mouse-ear cress</name>
    <dbReference type="NCBI Taxonomy" id="3702"/>
    <lineage>
        <taxon>Eukaryota</taxon>
        <taxon>Viridiplantae</taxon>
        <taxon>Streptophyta</taxon>
        <taxon>Embryophyta</taxon>
        <taxon>Tracheophyta</taxon>
        <taxon>Spermatophyta</taxon>
        <taxon>Magnoliopsida</taxon>
        <taxon>eudicotyledons</taxon>
        <taxon>Gunneridae</taxon>
        <taxon>Pentapetalae</taxon>
        <taxon>rosids</taxon>
        <taxon>malvids</taxon>
        <taxon>Brassicales</taxon>
        <taxon>Brassicaceae</taxon>
        <taxon>Camelineae</taxon>
        <taxon>Arabidopsis</taxon>
    </lineage>
</organism>
<sequence length="591" mass="66326">MLKSISSSSGDDHLLSLIVSSTGKLHLRQIHALLLRTSLIRNSDVFHHFLSRLALSLIPRDINYSCRVFSQRLNPTLSHCNTMIRAFSLSQTPCEGFRLFRSLRRNSSLPANPLSSSFALKCCIKSGDLLGGLQIHGKIFSDGFLSDSLLMTTLMDLYSTCENSTDACKVFDEIPKRDTVSWNVLFSCYLRNKRTRDVLVLFDKMKNDVDGCVKPDGVTCLLALQACANLGALDFGKQVHDFIDENGLSGALNLSNTLVSMYSRCGSMDKAYQVFYGMRERNVVSWTALISGLAMNGFGKEAIEAFNEMLKFGISPEEQTLTGLLSACSHSGLVAEGMMFFDRMRSGEFKIKPNLHHYGCVVDLLGRARLLDKAYSLIKSMEMKPDSTIWRTLLGACRVHGDVELGERVISHLIELKAEEAGDYVLLLNTYSTVGKWEKVTELRSLMKEKRIHTKPGCSAIELQGTVHEFIVDDVSHPRKEEIYKMLAEINQQLKIAGYVAEITSELHNLESEEEKGYALRYHSEKLAIAFGILVTPPGTTIRVTKNLRTCVDCHNFAKFVSDVYDRIVIVRDRSRFHHFKGGSCSCNDFW</sequence>
<comment type="similarity">
    <text evidence="1">Belongs to the PPR family. PCMP-H subfamily.</text>
</comment>
<comment type="online information" name="Pentatricopeptide repeat proteins">
    <link uri="https://ppr.plantenergy.uwa.edu.au"/>
</comment>
<evidence type="ECO:0000305" key="1"/>